<comment type="catalytic activity">
    <reaction evidence="1">
        <text>5-amino-1-(5-phospho-D-ribosyl)imidazole-4-carboxylate + L-aspartate + ATP = (2S)-2-[5-amino-1-(5-phospho-beta-D-ribosyl)imidazole-4-carboxamido]succinate + ADP + phosphate + 2 H(+)</text>
        <dbReference type="Rhea" id="RHEA:22628"/>
        <dbReference type="ChEBI" id="CHEBI:15378"/>
        <dbReference type="ChEBI" id="CHEBI:29991"/>
        <dbReference type="ChEBI" id="CHEBI:30616"/>
        <dbReference type="ChEBI" id="CHEBI:43474"/>
        <dbReference type="ChEBI" id="CHEBI:58443"/>
        <dbReference type="ChEBI" id="CHEBI:77657"/>
        <dbReference type="ChEBI" id="CHEBI:456216"/>
        <dbReference type="EC" id="6.3.2.6"/>
    </reaction>
</comment>
<comment type="pathway">
    <text evidence="1">Purine metabolism; IMP biosynthesis via de novo pathway; 5-amino-1-(5-phospho-D-ribosyl)imidazole-4-carboxamide from 5-amino-1-(5-phospho-D-ribosyl)imidazole-4-carboxylate: step 1/2.</text>
</comment>
<comment type="similarity">
    <text evidence="1">Belongs to the SAICAR synthetase family.</text>
</comment>
<evidence type="ECO:0000255" key="1">
    <source>
        <dbReference type="HAMAP-Rule" id="MF_00137"/>
    </source>
</evidence>
<accession>Q3AQN3</accession>
<keyword id="KW-0067">ATP-binding</keyword>
<keyword id="KW-0436">Ligase</keyword>
<keyword id="KW-0547">Nucleotide-binding</keyword>
<keyword id="KW-0658">Purine biosynthesis</keyword>
<dbReference type="EC" id="6.3.2.6" evidence="1"/>
<dbReference type="EMBL" id="CP000108">
    <property type="protein sequence ID" value="ABB28692.1"/>
    <property type="molecule type" value="Genomic_DNA"/>
</dbReference>
<dbReference type="SMR" id="Q3AQN3"/>
<dbReference type="STRING" id="340177.Cag_1435"/>
<dbReference type="KEGG" id="cch:Cag_1435"/>
<dbReference type="eggNOG" id="COG0152">
    <property type="taxonomic scope" value="Bacteria"/>
</dbReference>
<dbReference type="HOGENOM" id="CLU_061495_2_0_10"/>
<dbReference type="OrthoDB" id="9801549at2"/>
<dbReference type="UniPathway" id="UPA00074">
    <property type="reaction ID" value="UER00131"/>
</dbReference>
<dbReference type="GO" id="GO:0005524">
    <property type="term" value="F:ATP binding"/>
    <property type="evidence" value="ECO:0007669"/>
    <property type="project" value="UniProtKB-KW"/>
</dbReference>
<dbReference type="GO" id="GO:0004639">
    <property type="term" value="F:phosphoribosylaminoimidazolesuccinocarboxamide synthase activity"/>
    <property type="evidence" value="ECO:0007669"/>
    <property type="project" value="UniProtKB-UniRule"/>
</dbReference>
<dbReference type="GO" id="GO:0006189">
    <property type="term" value="P:'de novo' IMP biosynthetic process"/>
    <property type="evidence" value="ECO:0007669"/>
    <property type="project" value="UniProtKB-UniRule"/>
</dbReference>
<dbReference type="GO" id="GO:0009236">
    <property type="term" value="P:cobalamin biosynthetic process"/>
    <property type="evidence" value="ECO:0007669"/>
    <property type="project" value="InterPro"/>
</dbReference>
<dbReference type="CDD" id="cd01415">
    <property type="entry name" value="SAICAR_synt_PurC"/>
    <property type="match status" value="1"/>
</dbReference>
<dbReference type="FunFam" id="3.30.470.20:FF:000006">
    <property type="entry name" value="Phosphoribosylaminoimidazole-succinocarboxamide synthase"/>
    <property type="match status" value="1"/>
</dbReference>
<dbReference type="Gene3D" id="3.30.470.20">
    <property type="entry name" value="ATP-grasp fold, B domain"/>
    <property type="match status" value="1"/>
</dbReference>
<dbReference type="Gene3D" id="3.30.200.20">
    <property type="entry name" value="Phosphorylase Kinase, domain 1"/>
    <property type="match status" value="1"/>
</dbReference>
<dbReference type="HAMAP" id="MF_00137">
    <property type="entry name" value="SAICAR_synth"/>
    <property type="match status" value="1"/>
</dbReference>
<dbReference type="InterPro" id="IPR028923">
    <property type="entry name" value="SAICAR_synt/ADE2_N"/>
</dbReference>
<dbReference type="InterPro" id="IPR033934">
    <property type="entry name" value="SAICAR_synt_PurC"/>
</dbReference>
<dbReference type="InterPro" id="IPR001636">
    <property type="entry name" value="SAICAR_synth"/>
</dbReference>
<dbReference type="InterPro" id="IPR050089">
    <property type="entry name" value="SAICAR_synthetase"/>
</dbReference>
<dbReference type="InterPro" id="IPR018236">
    <property type="entry name" value="SAICAR_synthetase_CS"/>
</dbReference>
<dbReference type="NCBIfam" id="TIGR00081">
    <property type="entry name" value="purC"/>
    <property type="match status" value="1"/>
</dbReference>
<dbReference type="PANTHER" id="PTHR43599">
    <property type="entry name" value="MULTIFUNCTIONAL PROTEIN ADE2"/>
    <property type="match status" value="1"/>
</dbReference>
<dbReference type="PANTHER" id="PTHR43599:SF3">
    <property type="entry name" value="SI:DKEY-6E2.2"/>
    <property type="match status" value="1"/>
</dbReference>
<dbReference type="Pfam" id="PF01259">
    <property type="entry name" value="SAICAR_synt"/>
    <property type="match status" value="1"/>
</dbReference>
<dbReference type="SUPFAM" id="SSF56104">
    <property type="entry name" value="SAICAR synthase-like"/>
    <property type="match status" value="1"/>
</dbReference>
<dbReference type="PROSITE" id="PS01058">
    <property type="entry name" value="SAICAR_SYNTHETASE_2"/>
    <property type="match status" value="1"/>
</dbReference>
<name>PUR7_CHLCH</name>
<feature type="chain" id="PRO_1000018685" description="Phosphoribosylaminoimidazole-succinocarboxamide synthase">
    <location>
        <begin position="1"/>
        <end position="235"/>
    </location>
</feature>
<reference key="1">
    <citation type="submission" date="2005-08" db="EMBL/GenBank/DDBJ databases">
        <title>Complete sequence of Chlorobium chlorochromatii CaD3.</title>
        <authorList>
            <consortium name="US DOE Joint Genome Institute"/>
            <person name="Copeland A."/>
            <person name="Lucas S."/>
            <person name="Lapidus A."/>
            <person name="Barry K."/>
            <person name="Detter J.C."/>
            <person name="Glavina T."/>
            <person name="Hammon N."/>
            <person name="Israni S."/>
            <person name="Pitluck S."/>
            <person name="Bryant D."/>
            <person name="Schmutz J."/>
            <person name="Larimer F."/>
            <person name="Land M."/>
            <person name="Kyrpides N."/>
            <person name="Ivanova N."/>
            <person name="Richardson P."/>
        </authorList>
    </citation>
    <scope>NUCLEOTIDE SEQUENCE [LARGE SCALE GENOMIC DNA]</scope>
    <source>
        <strain>CaD3</strain>
    </source>
</reference>
<proteinExistence type="inferred from homology"/>
<protein>
    <recommendedName>
        <fullName evidence="1">Phosphoribosylaminoimidazole-succinocarboxamide synthase</fullName>
        <ecNumber evidence="1">6.3.2.6</ecNumber>
    </recommendedName>
    <alternativeName>
        <fullName evidence="1">SAICAR synthetase</fullName>
    </alternativeName>
</protein>
<gene>
    <name evidence="1" type="primary">purC</name>
    <name type="ordered locus">Cag_1435</name>
</gene>
<organism>
    <name type="scientific">Chlorobium chlorochromatii (strain CaD3)</name>
    <dbReference type="NCBI Taxonomy" id="340177"/>
    <lineage>
        <taxon>Bacteria</taxon>
        <taxon>Pseudomonadati</taxon>
        <taxon>Chlorobiota</taxon>
        <taxon>Chlorobiia</taxon>
        <taxon>Chlorobiales</taxon>
        <taxon>Chlorobiaceae</taxon>
        <taxon>Chlorobium/Pelodictyon group</taxon>
        <taxon>Chlorobium</taxon>
    </lineage>
</organism>
<sequence length="235" mass="26784">MNKKEQLYEGKAKKVFATDNPDLVIQEFKDDATAFNNKKKGTIADKGVVNNAISCKLFTLLEQHGIRTHLVEKLSEREMLCRHLDIIKAEVVVRNIAAGSLVRRYGFAEGTVLECPIVELYLKDDDLDDPLMIEAHAVALGVGTFEELAHLKQQAEVINTVLRSFFAERKLKLVDFKLEFGRHNGEILLGDEISPDTCRFWDLATNEKLDKDRFRFDLGSVEEAYSEVERRVLEL</sequence>